<sequence length="339" mass="39385">MPLFGKSQKSPVELVKSLKEAINALEAGDRKVEKAQEDVSKNLVSIKNMLYGSSDAEPPADYVVAQLSQELYNSNLLLLLIQNLHRIDFEGKKHVALIFNNVLRRQIGTRSPTVEYICTKPEILFTLMAGYEDAHPEIALNSGTMLRECARYEALAKIMLHSDEFFKFFRYVEVSTFDIASDAFSTFKELLTRHKLLCAEFLDANYDKFFSQHYQRLLNSENYVTRRQSLKLLGELLLDRHNFTVMTRYISEPENLKLMMNMLKEKSRNIQFEAFHVFKVFVANPNKPKPILDILLRNQTKLVDFLTNFHTDRSEDEQFNDEKAYLIKQIKELKPLPEA</sequence>
<reference key="1">
    <citation type="journal article" date="1996" name="DNA Cell Biol.">
        <title>Molecular characterization of the Drosophila Mo25 gene, which is conserved among Drosophila, mouse, and yeast.</title>
        <authorList>
            <person name="Nozaki M."/>
            <person name="Onishi Y."/>
            <person name="Togashi S."/>
            <person name="Miyamoto H."/>
        </authorList>
    </citation>
    <scope>NUCLEOTIDE SEQUENCE [MRNA]</scope>
</reference>
<reference key="2">
    <citation type="journal article" date="2000" name="Science">
        <title>The genome sequence of Drosophila melanogaster.</title>
        <authorList>
            <person name="Adams M.D."/>
            <person name="Celniker S.E."/>
            <person name="Holt R.A."/>
            <person name="Evans C.A."/>
            <person name="Gocayne J.D."/>
            <person name="Amanatides P.G."/>
            <person name="Scherer S.E."/>
            <person name="Li P.W."/>
            <person name="Hoskins R.A."/>
            <person name="Galle R.F."/>
            <person name="George R.A."/>
            <person name="Lewis S.E."/>
            <person name="Richards S."/>
            <person name="Ashburner M."/>
            <person name="Henderson S.N."/>
            <person name="Sutton G.G."/>
            <person name="Wortman J.R."/>
            <person name="Yandell M.D."/>
            <person name="Zhang Q."/>
            <person name="Chen L.X."/>
            <person name="Brandon R.C."/>
            <person name="Rogers Y.-H.C."/>
            <person name="Blazej R.G."/>
            <person name="Champe M."/>
            <person name="Pfeiffer B.D."/>
            <person name="Wan K.H."/>
            <person name="Doyle C."/>
            <person name="Baxter E.G."/>
            <person name="Helt G."/>
            <person name="Nelson C.R."/>
            <person name="Miklos G.L.G."/>
            <person name="Abril J.F."/>
            <person name="Agbayani A."/>
            <person name="An H.-J."/>
            <person name="Andrews-Pfannkoch C."/>
            <person name="Baldwin D."/>
            <person name="Ballew R.M."/>
            <person name="Basu A."/>
            <person name="Baxendale J."/>
            <person name="Bayraktaroglu L."/>
            <person name="Beasley E.M."/>
            <person name="Beeson K.Y."/>
            <person name="Benos P.V."/>
            <person name="Berman B.P."/>
            <person name="Bhandari D."/>
            <person name="Bolshakov S."/>
            <person name="Borkova D."/>
            <person name="Botchan M.R."/>
            <person name="Bouck J."/>
            <person name="Brokstein P."/>
            <person name="Brottier P."/>
            <person name="Burtis K.C."/>
            <person name="Busam D.A."/>
            <person name="Butler H."/>
            <person name="Cadieu E."/>
            <person name="Center A."/>
            <person name="Chandra I."/>
            <person name="Cherry J.M."/>
            <person name="Cawley S."/>
            <person name="Dahlke C."/>
            <person name="Davenport L.B."/>
            <person name="Davies P."/>
            <person name="de Pablos B."/>
            <person name="Delcher A."/>
            <person name="Deng Z."/>
            <person name="Mays A.D."/>
            <person name="Dew I."/>
            <person name="Dietz S.M."/>
            <person name="Dodson K."/>
            <person name="Doup L.E."/>
            <person name="Downes M."/>
            <person name="Dugan-Rocha S."/>
            <person name="Dunkov B.C."/>
            <person name="Dunn P."/>
            <person name="Durbin K.J."/>
            <person name="Evangelista C.C."/>
            <person name="Ferraz C."/>
            <person name="Ferriera S."/>
            <person name="Fleischmann W."/>
            <person name="Fosler C."/>
            <person name="Gabrielian A.E."/>
            <person name="Garg N.S."/>
            <person name="Gelbart W.M."/>
            <person name="Glasser K."/>
            <person name="Glodek A."/>
            <person name="Gong F."/>
            <person name="Gorrell J.H."/>
            <person name="Gu Z."/>
            <person name="Guan P."/>
            <person name="Harris M."/>
            <person name="Harris N.L."/>
            <person name="Harvey D.A."/>
            <person name="Heiman T.J."/>
            <person name="Hernandez J.R."/>
            <person name="Houck J."/>
            <person name="Hostin D."/>
            <person name="Houston K.A."/>
            <person name="Howland T.J."/>
            <person name="Wei M.-H."/>
            <person name="Ibegwam C."/>
            <person name="Jalali M."/>
            <person name="Kalush F."/>
            <person name="Karpen G.H."/>
            <person name="Ke Z."/>
            <person name="Kennison J.A."/>
            <person name="Ketchum K.A."/>
            <person name="Kimmel B.E."/>
            <person name="Kodira C.D."/>
            <person name="Kraft C.L."/>
            <person name="Kravitz S."/>
            <person name="Kulp D."/>
            <person name="Lai Z."/>
            <person name="Lasko P."/>
            <person name="Lei Y."/>
            <person name="Levitsky A.A."/>
            <person name="Li J.H."/>
            <person name="Li Z."/>
            <person name="Liang Y."/>
            <person name="Lin X."/>
            <person name="Liu X."/>
            <person name="Mattei B."/>
            <person name="McIntosh T.C."/>
            <person name="McLeod M.P."/>
            <person name="McPherson D."/>
            <person name="Merkulov G."/>
            <person name="Milshina N.V."/>
            <person name="Mobarry C."/>
            <person name="Morris J."/>
            <person name="Moshrefi A."/>
            <person name="Mount S.M."/>
            <person name="Moy M."/>
            <person name="Murphy B."/>
            <person name="Murphy L."/>
            <person name="Muzny D.M."/>
            <person name="Nelson D.L."/>
            <person name="Nelson D.R."/>
            <person name="Nelson K.A."/>
            <person name="Nixon K."/>
            <person name="Nusskern D.R."/>
            <person name="Pacleb J.M."/>
            <person name="Palazzolo M."/>
            <person name="Pittman G.S."/>
            <person name="Pan S."/>
            <person name="Pollard J."/>
            <person name="Puri V."/>
            <person name="Reese M.G."/>
            <person name="Reinert K."/>
            <person name="Remington K."/>
            <person name="Saunders R.D.C."/>
            <person name="Scheeler F."/>
            <person name="Shen H."/>
            <person name="Shue B.C."/>
            <person name="Siden-Kiamos I."/>
            <person name="Simpson M."/>
            <person name="Skupski M.P."/>
            <person name="Smith T.J."/>
            <person name="Spier E."/>
            <person name="Spradling A.C."/>
            <person name="Stapleton M."/>
            <person name="Strong R."/>
            <person name="Sun E."/>
            <person name="Svirskas R."/>
            <person name="Tector C."/>
            <person name="Turner R."/>
            <person name="Venter E."/>
            <person name="Wang A.H."/>
            <person name="Wang X."/>
            <person name="Wang Z.-Y."/>
            <person name="Wassarman D.A."/>
            <person name="Weinstock G.M."/>
            <person name="Weissenbach J."/>
            <person name="Williams S.M."/>
            <person name="Woodage T."/>
            <person name="Worley K.C."/>
            <person name="Wu D."/>
            <person name="Yang S."/>
            <person name="Yao Q.A."/>
            <person name="Ye J."/>
            <person name="Yeh R.-F."/>
            <person name="Zaveri J.S."/>
            <person name="Zhan M."/>
            <person name="Zhang G."/>
            <person name="Zhao Q."/>
            <person name="Zheng L."/>
            <person name="Zheng X.H."/>
            <person name="Zhong F.N."/>
            <person name="Zhong W."/>
            <person name="Zhou X."/>
            <person name="Zhu S.C."/>
            <person name="Zhu X."/>
            <person name="Smith H.O."/>
            <person name="Gibbs R.A."/>
            <person name="Myers E.W."/>
            <person name="Rubin G.M."/>
            <person name="Venter J.C."/>
        </authorList>
    </citation>
    <scope>NUCLEOTIDE SEQUENCE [LARGE SCALE GENOMIC DNA]</scope>
    <source>
        <strain>Berkeley</strain>
    </source>
</reference>
<reference key="3">
    <citation type="journal article" date="2002" name="Genome Biol.">
        <title>Annotation of the Drosophila melanogaster euchromatic genome: a systematic review.</title>
        <authorList>
            <person name="Misra S."/>
            <person name="Crosby M.A."/>
            <person name="Mungall C.J."/>
            <person name="Matthews B.B."/>
            <person name="Campbell K.S."/>
            <person name="Hradecky P."/>
            <person name="Huang Y."/>
            <person name="Kaminker J.S."/>
            <person name="Millburn G.H."/>
            <person name="Prochnik S.E."/>
            <person name="Smith C.D."/>
            <person name="Tupy J.L."/>
            <person name="Whitfield E.J."/>
            <person name="Bayraktaroglu L."/>
            <person name="Berman B.P."/>
            <person name="Bettencourt B.R."/>
            <person name="Celniker S.E."/>
            <person name="de Grey A.D.N.J."/>
            <person name="Drysdale R.A."/>
            <person name="Harris N.L."/>
            <person name="Richter J."/>
            <person name="Russo S."/>
            <person name="Schroeder A.J."/>
            <person name="Shu S.Q."/>
            <person name="Stapleton M."/>
            <person name="Yamada C."/>
            <person name="Ashburner M."/>
            <person name="Gelbart W.M."/>
            <person name="Rubin G.M."/>
            <person name="Lewis S.E."/>
        </authorList>
    </citation>
    <scope>GENOME REANNOTATION</scope>
    <source>
        <strain>Berkeley</strain>
    </source>
</reference>
<reference key="4">
    <citation type="journal article" date="2002" name="Genome Biol.">
        <title>A Drosophila full-length cDNA resource.</title>
        <authorList>
            <person name="Stapleton M."/>
            <person name="Carlson J.W."/>
            <person name="Brokstein P."/>
            <person name="Yu C."/>
            <person name="Champe M."/>
            <person name="George R.A."/>
            <person name="Guarin H."/>
            <person name="Kronmiller B."/>
            <person name="Pacleb J.M."/>
            <person name="Park S."/>
            <person name="Wan K.H."/>
            <person name="Rubin G.M."/>
            <person name="Celniker S.E."/>
        </authorList>
    </citation>
    <scope>NUCLEOTIDE SEQUENCE [LARGE SCALE MRNA]</scope>
    <source>
        <strain>Berkeley</strain>
        <tissue>Embryo</tissue>
    </source>
</reference>
<comment type="similarity">
    <text evidence="1">Belongs to the Mo25 family.</text>
</comment>
<gene>
    <name type="primary">Mo25</name>
    <name type="ORF">CG4083</name>
</gene>
<keyword id="KW-1185">Reference proteome</keyword>
<dbReference type="EMBL" id="AB000402">
    <property type="protein sequence ID" value="BAA19098.1"/>
    <property type="molecule type" value="mRNA"/>
</dbReference>
<dbReference type="EMBL" id="AE014296">
    <property type="protein sequence ID" value="AAF49432.1"/>
    <property type="molecule type" value="Genomic_DNA"/>
</dbReference>
<dbReference type="EMBL" id="AY128438">
    <property type="protein sequence ID" value="AAM75031.1"/>
    <property type="molecule type" value="mRNA"/>
</dbReference>
<dbReference type="RefSeq" id="NP_001261958.1">
    <property type="nucleotide sequence ID" value="NM_001275029.1"/>
</dbReference>
<dbReference type="RefSeq" id="NP_524117.1">
    <property type="nucleotide sequence ID" value="NM_079393.2"/>
</dbReference>
<dbReference type="SMR" id="P91891"/>
<dbReference type="BioGRID" id="65158">
    <property type="interactions" value="3"/>
</dbReference>
<dbReference type="ComplexPortal" id="CPX-9064">
    <property type="entry name" value="LKB1-STRAD-MO25 serine/threonine protein kinase complex"/>
</dbReference>
<dbReference type="FunCoup" id="P91891">
    <property type="interactions" value="2602"/>
</dbReference>
<dbReference type="IntAct" id="P91891">
    <property type="interactions" value="6"/>
</dbReference>
<dbReference type="STRING" id="7227.FBpp0075117"/>
<dbReference type="PaxDb" id="7227-FBpp0075117"/>
<dbReference type="DNASU" id="39858"/>
<dbReference type="EnsemblMetazoa" id="FBtr0075358">
    <property type="protein sequence ID" value="FBpp0075117"/>
    <property type="gene ID" value="FBgn0017572"/>
</dbReference>
<dbReference type="EnsemblMetazoa" id="FBtr0331560">
    <property type="protein sequence ID" value="FBpp0303950"/>
    <property type="gene ID" value="FBgn0017572"/>
</dbReference>
<dbReference type="GeneID" id="39858"/>
<dbReference type="KEGG" id="dme:Dmel_CG4083"/>
<dbReference type="UCSC" id="CG4083-RA">
    <property type="organism name" value="d. melanogaster"/>
</dbReference>
<dbReference type="AGR" id="FB:FBgn0017572"/>
<dbReference type="CTD" id="39858"/>
<dbReference type="FlyBase" id="FBgn0017572">
    <property type="gene designation" value="Mo25"/>
</dbReference>
<dbReference type="VEuPathDB" id="VectorBase:FBgn0017572"/>
<dbReference type="eggNOG" id="KOG1566">
    <property type="taxonomic scope" value="Eukaryota"/>
</dbReference>
<dbReference type="GeneTree" id="ENSGT00390000004360"/>
<dbReference type="HOGENOM" id="CLU_035755_0_0_1"/>
<dbReference type="InParanoid" id="P91891"/>
<dbReference type="OMA" id="AYDHKES"/>
<dbReference type="OrthoDB" id="609103at2759"/>
<dbReference type="PhylomeDB" id="P91891"/>
<dbReference type="Reactome" id="R-DME-6798695">
    <property type="pathway name" value="Neutrophil degranulation"/>
</dbReference>
<dbReference type="BioGRID-ORCS" id="39858">
    <property type="hits" value="0 hits in 3 CRISPR screens"/>
</dbReference>
<dbReference type="GenomeRNAi" id="39858"/>
<dbReference type="PRO" id="PR:P91891"/>
<dbReference type="Proteomes" id="UP000000803">
    <property type="component" value="Chromosome 3L"/>
</dbReference>
<dbReference type="Bgee" id="FBgn0017572">
    <property type="expression patterns" value="Expressed in T neuron T4c (Drosophila) in embryonic/larval optic lobe (Drosophila) and 192 other cell types or tissues"/>
</dbReference>
<dbReference type="ExpressionAtlas" id="P91891">
    <property type="expression patterns" value="baseline and differential"/>
</dbReference>
<dbReference type="GO" id="GO:0005737">
    <property type="term" value="C:cytoplasm"/>
    <property type="evidence" value="ECO:0000314"/>
    <property type="project" value="FlyBase"/>
</dbReference>
<dbReference type="GO" id="GO:0005634">
    <property type="term" value="C:nucleus"/>
    <property type="evidence" value="ECO:0000314"/>
    <property type="project" value="FlyBase"/>
</dbReference>
<dbReference type="GO" id="GO:0043539">
    <property type="term" value="F:protein serine/threonine kinase activator activity"/>
    <property type="evidence" value="ECO:0000250"/>
    <property type="project" value="FlyBase"/>
</dbReference>
<dbReference type="GO" id="GO:0035556">
    <property type="term" value="P:intracellular signal transduction"/>
    <property type="evidence" value="ECO:0000318"/>
    <property type="project" value="GO_Central"/>
</dbReference>
<dbReference type="GO" id="GO:1904263">
    <property type="term" value="P:positive regulation of TORC1 signaling"/>
    <property type="evidence" value="ECO:0000304"/>
    <property type="project" value="FlyBase"/>
</dbReference>
<dbReference type="FunFam" id="1.25.10.10:FF:000025">
    <property type="entry name" value="Calcium-binding protein 39"/>
    <property type="match status" value="1"/>
</dbReference>
<dbReference type="Gene3D" id="1.25.10.10">
    <property type="entry name" value="Leucine-rich Repeat Variant"/>
    <property type="match status" value="1"/>
</dbReference>
<dbReference type="InterPro" id="IPR011989">
    <property type="entry name" value="ARM-like"/>
</dbReference>
<dbReference type="InterPro" id="IPR016024">
    <property type="entry name" value="ARM-type_fold"/>
</dbReference>
<dbReference type="InterPro" id="IPR013878">
    <property type="entry name" value="Mo25"/>
</dbReference>
<dbReference type="PANTHER" id="PTHR10182">
    <property type="entry name" value="CALCIUM-BINDING PROTEIN 39-RELATED"/>
    <property type="match status" value="1"/>
</dbReference>
<dbReference type="PANTHER" id="PTHR10182:SF3">
    <property type="entry name" value="PROTEIN MO25"/>
    <property type="match status" value="1"/>
</dbReference>
<dbReference type="Pfam" id="PF08569">
    <property type="entry name" value="Mo25"/>
    <property type="match status" value="1"/>
</dbReference>
<dbReference type="SUPFAM" id="SSF48371">
    <property type="entry name" value="ARM repeat"/>
    <property type="match status" value="1"/>
</dbReference>
<name>MO25_DROME</name>
<feature type="chain" id="PRO_0000209828" description="Protein Mo25">
    <location>
        <begin position="1"/>
        <end position="339"/>
    </location>
</feature>
<feature type="sequence conflict" description="In Ref. 1; BAA19098." evidence="1" ref="1">
    <original>Y</original>
    <variation>H</variation>
    <location>
        <position position="51"/>
    </location>
</feature>
<feature type="sequence conflict" description="In Ref. 1; BAA19098." evidence="1" ref="1">
    <original>V</original>
    <variation>L</variation>
    <location>
        <position position="102"/>
    </location>
</feature>
<proteinExistence type="evidence at transcript level"/>
<evidence type="ECO:0000305" key="1"/>
<accession>P91891</accession>
<accession>Q540S2</accession>
<accession>Q9VV85</accession>
<organism>
    <name type="scientific">Drosophila melanogaster</name>
    <name type="common">Fruit fly</name>
    <dbReference type="NCBI Taxonomy" id="7227"/>
    <lineage>
        <taxon>Eukaryota</taxon>
        <taxon>Metazoa</taxon>
        <taxon>Ecdysozoa</taxon>
        <taxon>Arthropoda</taxon>
        <taxon>Hexapoda</taxon>
        <taxon>Insecta</taxon>
        <taxon>Pterygota</taxon>
        <taxon>Neoptera</taxon>
        <taxon>Endopterygota</taxon>
        <taxon>Diptera</taxon>
        <taxon>Brachycera</taxon>
        <taxon>Muscomorpha</taxon>
        <taxon>Ephydroidea</taxon>
        <taxon>Drosophilidae</taxon>
        <taxon>Drosophila</taxon>
        <taxon>Sophophora</taxon>
    </lineage>
</organism>
<protein>
    <recommendedName>
        <fullName>Protein Mo25</fullName>
    </recommendedName>
    <alternativeName>
        <fullName>dMo25</fullName>
    </alternativeName>
</protein>